<proteinExistence type="inferred from homology"/>
<organism>
    <name type="scientific">Staphylococcus saprophyticus subsp. saprophyticus (strain ATCC 15305 / DSM 20229 / NCIMB 8711 / NCTC 7292 / S-41)</name>
    <dbReference type="NCBI Taxonomy" id="342451"/>
    <lineage>
        <taxon>Bacteria</taxon>
        <taxon>Bacillati</taxon>
        <taxon>Bacillota</taxon>
        <taxon>Bacilli</taxon>
        <taxon>Bacillales</taxon>
        <taxon>Staphylococcaceae</taxon>
        <taxon>Staphylococcus</taxon>
    </lineage>
</organism>
<comment type="function">
    <text evidence="1">Catalyzes the decarboxylation of orotidine 5'-monophosphate (OMP) to uridine 5'-monophosphate (UMP).</text>
</comment>
<comment type="catalytic activity">
    <reaction evidence="1">
        <text>orotidine 5'-phosphate + H(+) = UMP + CO2</text>
        <dbReference type="Rhea" id="RHEA:11596"/>
        <dbReference type="ChEBI" id="CHEBI:15378"/>
        <dbReference type="ChEBI" id="CHEBI:16526"/>
        <dbReference type="ChEBI" id="CHEBI:57538"/>
        <dbReference type="ChEBI" id="CHEBI:57865"/>
        <dbReference type="EC" id="4.1.1.23"/>
    </reaction>
</comment>
<comment type="pathway">
    <text evidence="1">Pyrimidine metabolism; UMP biosynthesis via de novo pathway; UMP from orotate: step 2/2.</text>
</comment>
<comment type="subunit">
    <text evidence="1">Homodimer.</text>
</comment>
<comment type="similarity">
    <text evidence="1">Belongs to the OMP decarboxylase family. Type 1 subfamily.</text>
</comment>
<feature type="chain" id="PRO_0000134583" description="Orotidine 5'-phosphate decarboxylase">
    <location>
        <begin position="1"/>
        <end position="230"/>
    </location>
</feature>
<feature type="region of interest" description="Disordered" evidence="2">
    <location>
        <begin position="177"/>
        <end position="196"/>
    </location>
</feature>
<feature type="compositionally biased region" description="Basic and acidic residues" evidence="2">
    <location>
        <begin position="179"/>
        <end position="196"/>
    </location>
</feature>
<feature type="active site" description="Proton donor" evidence="1">
    <location>
        <position position="60"/>
    </location>
</feature>
<feature type="binding site" evidence="1">
    <location>
        <position position="10"/>
    </location>
    <ligand>
        <name>substrate</name>
    </ligand>
</feature>
<feature type="binding site" evidence="1">
    <location>
        <position position="31"/>
    </location>
    <ligand>
        <name>substrate</name>
    </ligand>
</feature>
<feature type="binding site" evidence="1">
    <location>
        <begin position="58"/>
        <end position="67"/>
    </location>
    <ligand>
        <name>substrate</name>
    </ligand>
</feature>
<feature type="binding site" evidence="1">
    <location>
        <position position="117"/>
    </location>
    <ligand>
        <name>substrate</name>
    </ligand>
</feature>
<feature type="binding site" evidence="1">
    <location>
        <position position="179"/>
    </location>
    <ligand>
        <name>substrate</name>
    </ligand>
</feature>
<feature type="binding site" evidence="1">
    <location>
        <position position="188"/>
    </location>
    <ligand>
        <name>substrate</name>
    </ligand>
</feature>
<feature type="binding site" evidence="1">
    <location>
        <position position="208"/>
    </location>
    <ligand>
        <name>substrate</name>
    </ligand>
</feature>
<feature type="binding site" evidence="1">
    <location>
        <position position="209"/>
    </location>
    <ligand>
        <name>substrate</name>
    </ligand>
</feature>
<keyword id="KW-0210">Decarboxylase</keyword>
<keyword id="KW-0456">Lyase</keyword>
<keyword id="KW-0665">Pyrimidine biosynthesis</keyword>
<keyword id="KW-1185">Reference proteome</keyword>
<protein>
    <recommendedName>
        <fullName evidence="1">Orotidine 5'-phosphate decarboxylase</fullName>
        <ecNumber evidence="1">4.1.1.23</ecNumber>
    </recommendedName>
    <alternativeName>
        <fullName evidence="1">OMP decarboxylase</fullName>
        <shortName evidence="1">OMPDCase</shortName>
        <shortName evidence="1">OMPdecase</shortName>
    </alternativeName>
</protein>
<dbReference type="EC" id="4.1.1.23" evidence="1"/>
<dbReference type="EMBL" id="AP008934">
    <property type="protein sequence ID" value="BAE18713.1"/>
    <property type="molecule type" value="Genomic_DNA"/>
</dbReference>
<dbReference type="RefSeq" id="WP_011303310.1">
    <property type="nucleotide sequence ID" value="NC_007350.1"/>
</dbReference>
<dbReference type="SMR" id="Q49WY5"/>
<dbReference type="GeneID" id="3615312"/>
<dbReference type="KEGG" id="ssp:SSP1568"/>
<dbReference type="PATRIC" id="fig|342451.11.peg.1570"/>
<dbReference type="eggNOG" id="COG0284">
    <property type="taxonomic scope" value="Bacteria"/>
</dbReference>
<dbReference type="HOGENOM" id="CLU_067069_1_1_9"/>
<dbReference type="OrthoDB" id="9806203at2"/>
<dbReference type="UniPathway" id="UPA00070">
    <property type="reaction ID" value="UER00120"/>
</dbReference>
<dbReference type="Proteomes" id="UP000006371">
    <property type="component" value="Chromosome"/>
</dbReference>
<dbReference type="GO" id="GO:0005829">
    <property type="term" value="C:cytosol"/>
    <property type="evidence" value="ECO:0007669"/>
    <property type="project" value="TreeGrafter"/>
</dbReference>
<dbReference type="GO" id="GO:0004590">
    <property type="term" value="F:orotidine-5'-phosphate decarboxylase activity"/>
    <property type="evidence" value="ECO:0007669"/>
    <property type="project" value="UniProtKB-UniRule"/>
</dbReference>
<dbReference type="GO" id="GO:0006207">
    <property type="term" value="P:'de novo' pyrimidine nucleobase biosynthetic process"/>
    <property type="evidence" value="ECO:0007669"/>
    <property type="project" value="InterPro"/>
</dbReference>
<dbReference type="GO" id="GO:0044205">
    <property type="term" value="P:'de novo' UMP biosynthetic process"/>
    <property type="evidence" value="ECO:0007669"/>
    <property type="project" value="UniProtKB-UniRule"/>
</dbReference>
<dbReference type="CDD" id="cd04725">
    <property type="entry name" value="OMP_decarboxylase_like"/>
    <property type="match status" value="1"/>
</dbReference>
<dbReference type="FunFam" id="3.20.20.70:FF:000015">
    <property type="entry name" value="Orotidine 5'-phosphate decarboxylase"/>
    <property type="match status" value="1"/>
</dbReference>
<dbReference type="Gene3D" id="3.20.20.70">
    <property type="entry name" value="Aldolase class I"/>
    <property type="match status" value="1"/>
</dbReference>
<dbReference type="HAMAP" id="MF_01200_B">
    <property type="entry name" value="OMPdecase_type1_B"/>
    <property type="match status" value="1"/>
</dbReference>
<dbReference type="InterPro" id="IPR013785">
    <property type="entry name" value="Aldolase_TIM"/>
</dbReference>
<dbReference type="InterPro" id="IPR014732">
    <property type="entry name" value="OMPdecase"/>
</dbReference>
<dbReference type="InterPro" id="IPR018089">
    <property type="entry name" value="OMPdecase_AS"/>
</dbReference>
<dbReference type="InterPro" id="IPR047596">
    <property type="entry name" value="OMPdecase_bac"/>
</dbReference>
<dbReference type="InterPro" id="IPR001754">
    <property type="entry name" value="OMPdeCOase_dom"/>
</dbReference>
<dbReference type="InterPro" id="IPR011060">
    <property type="entry name" value="RibuloseP-bd_barrel"/>
</dbReference>
<dbReference type="NCBIfam" id="NF001273">
    <property type="entry name" value="PRK00230.1"/>
    <property type="match status" value="1"/>
</dbReference>
<dbReference type="NCBIfam" id="TIGR01740">
    <property type="entry name" value="pyrF"/>
    <property type="match status" value="1"/>
</dbReference>
<dbReference type="PANTHER" id="PTHR32119">
    <property type="entry name" value="OROTIDINE 5'-PHOSPHATE DECARBOXYLASE"/>
    <property type="match status" value="1"/>
</dbReference>
<dbReference type="PANTHER" id="PTHR32119:SF2">
    <property type="entry name" value="OROTIDINE 5'-PHOSPHATE DECARBOXYLASE"/>
    <property type="match status" value="1"/>
</dbReference>
<dbReference type="Pfam" id="PF00215">
    <property type="entry name" value="OMPdecase"/>
    <property type="match status" value="1"/>
</dbReference>
<dbReference type="SMART" id="SM00934">
    <property type="entry name" value="OMPdecase"/>
    <property type="match status" value="1"/>
</dbReference>
<dbReference type="SUPFAM" id="SSF51366">
    <property type="entry name" value="Ribulose-phoshate binding barrel"/>
    <property type="match status" value="1"/>
</dbReference>
<dbReference type="PROSITE" id="PS00156">
    <property type="entry name" value="OMPDECASE"/>
    <property type="match status" value="1"/>
</dbReference>
<reference key="1">
    <citation type="journal article" date="2005" name="Proc. Natl. Acad. Sci. U.S.A.">
        <title>Whole genome sequence of Staphylococcus saprophyticus reveals the pathogenesis of uncomplicated urinary tract infection.</title>
        <authorList>
            <person name="Kuroda M."/>
            <person name="Yamashita A."/>
            <person name="Hirakawa H."/>
            <person name="Kumano M."/>
            <person name="Morikawa K."/>
            <person name="Higashide M."/>
            <person name="Maruyama A."/>
            <person name="Inose Y."/>
            <person name="Matoba K."/>
            <person name="Toh H."/>
            <person name="Kuhara S."/>
            <person name="Hattori M."/>
            <person name="Ohta T."/>
        </authorList>
    </citation>
    <scope>NUCLEOTIDE SEQUENCE [LARGE SCALE GENOMIC DNA]</scope>
    <source>
        <strain>ATCC 15305 / DSM 20229 / NCIMB 8711 / NCTC 7292 / S-41</strain>
    </source>
</reference>
<evidence type="ECO:0000255" key="1">
    <source>
        <dbReference type="HAMAP-Rule" id="MF_01200"/>
    </source>
</evidence>
<evidence type="ECO:0000256" key="2">
    <source>
        <dbReference type="SAM" id="MobiDB-lite"/>
    </source>
</evidence>
<sequence>MKNLPIIALDFDSTEAVDQFLDQFNEPLFVKIGMELFYQTGPQLIASIKDRGHDIFLDLKLHDIPNTVGKAMEGLSKLNIDLVNVHAAGGTEMMKQALNGLQKHNPDIKLIAVTQLTSTTETMLHKEQNIQTSIEEAVLNYATLAQSSGLDGIVCSPLEAKLVKNELGNDFLKVTPGIRPKDASSDDQKRITTPEDAKELGSTHIVVGRPITKSENPVASYHKIKESWLG</sequence>
<name>PYRF_STAS1</name>
<gene>
    <name evidence="1" type="primary">pyrF</name>
    <name type="ordered locus">SSP1568</name>
</gene>
<accession>Q49WY5</accession>